<sequence>MEDGSVSYGFKNIFITMFATFFFFKLLIKVFLALLTHFYIVKGNRKEAARIAEEIFGEISDCWADRSPLHEAAAQGRLLALKTLIAQGVNVNLVTINRVSSLHEACLGGHVACAKALLENGAHVNGVTVHGATPLFNACCSGSAACVNVLLEFGAKAQLEVHLASPIHEAVKRGNRECMEILLANNVNIDQEVPHLGTPLYAACTYQRLDCVKKLLELGANVNHGQWLDTPLHAAAKQNSVEIIHLLIDYGANLKCKNAQGQSALDLAAPKSSVEQALLLREGPPALSQLCRLCVRKCLGRNCHKTIHKLYLPDPLEKFLLYQ</sequence>
<protein>
    <recommendedName>
        <fullName>Ankyrin repeat and SOCS box protein 11</fullName>
        <shortName>ASB-11</shortName>
    </recommendedName>
</protein>
<name>ASB11_BOVIN</name>
<keyword id="KW-0040">ANK repeat</keyword>
<keyword id="KW-0256">Endoplasmic reticulum</keyword>
<keyword id="KW-1185">Reference proteome</keyword>
<keyword id="KW-0677">Repeat</keyword>
<keyword id="KW-0833">Ubl conjugation pathway</keyword>
<feature type="chain" id="PRO_0000244389" description="Ankyrin repeat and SOCS box protein 11">
    <location>
        <begin position="1"/>
        <end position="323"/>
    </location>
</feature>
<feature type="repeat" description="ANK 1">
    <location>
        <begin position="64"/>
        <end position="93"/>
    </location>
</feature>
<feature type="repeat" description="ANK 2">
    <location>
        <begin position="97"/>
        <end position="126"/>
    </location>
</feature>
<feature type="repeat" description="ANK 3">
    <location>
        <begin position="130"/>
        <end position="159"/>
    </location>
</feature>
<feature type="repeat" description="ANK 4">
    <location>
        <begin position="162"/>
        <end position="191"/>
    </location>
</feature>
<feature type="repeat" description="ANK 5">
    <location>
        <begin position="195"/>
        <end position="224"/>
    </location>
</feature>
<feature type="repeat" description="ANK 6">
    <location>
        <begin position="227"/>
        <end position="256"/>
    </location>
</feature>
<feature type="domain" description="SOCS box" evidence="2">
    <location>
        <begin position="273"/>
        <end position="323"/>
    </location>
</feature>
<gene>
    <name type="primary">ASB11</name>
</gene>
<comment type="function">
    <text evidence="1">Substrate-recognition component of a cullin-5-RING E3 ubiquitin-protein ligase complex (ECS complex, also named CRL5 complex), which mediates the ubiquitination and subsequent proteasomal degradation of target proteins, such as BIK, DIRAS2 and RPN1. The ECS(ASB11) complex acts as a regulator of the endoplasmic reticulum unfolded protein response by mediating ubiquitination and degradation of BIK.</text>
</comment>
<comment type="pathway">
    <text evidence="1">Protein modification; protein ubiquitination.</text>
</comment>
<comment type="subunit">
    <text evidence="1">Substrate-recognition component of the ECS(ASB11) complex, composed of ASB11, CUL5, ELOB, ELOC and RNF7/RBX2.</text>
</comment>
<comment type="subcellular location">
    <subcellularLocation>
        <location evidence="1">Endoplasmic reticulum</location>
    </subcellularLocation>
</comment>
<comment type="similarity">
    <text evidence="3">Belongs to the ankyrin SOCS box (ASB) family.</text>
</comment>
<dbReference type="EMBL" id="BC102916">
    <property type="protein sequence ID" value="AAI02917.1"/>
    <property type="molecule type" value="mRNA"/>
</dbReference>
<dbReference type="RefSeq" id="NP_001029585.1">
    <property type="nucleotide sequence ID" value="NM_001034413.2"/>
</dbReference>
<dbReference type="SMR" id="Q3SZE4"/>
<dbReference type="STRING" id="9913.ENSBTAP00000038650"/>
<dbReference type="PaxDb" id="9913-ENSBTAP00000038650"/>
<dbReference type="GeneID" id="511852"/>
<dbReference type="KEGG" id="bta:511852"/>
<dbReference type="CTD" id="140456"/>
<dbReference type="eggNOG" id="KOG0504">
    <property type="taxonomic scope" value="Eukaryota"/>
</dbReference>
<dbReference type="HOGENOM" id="CLU_000134_4_1_1"/>
<dbReference type="InParanoid" id="Q3SZE4"/>
<dbReference type="OrthoDB" id="3246549at2759"/>
<dbReference type="TreeFam" id="TF331945"/>
<dbReference type="UniPathway" id="UPA00143"/>
<dbReference type="Proteomes" id="UP000009136">
    <property type="component" value="Unplaced"/>
</dbReference>
<dbReference type="GO" id="GO:0031466">
    <property type="term" value="C:Cul5-RING ubiquitin ligase complex"/>
    <property type="evidence" value="ECO:0000250"/>
    <property type="project" value="UniProtKB"/>
</dbReference>
<dbReference type="GO" id="GO:0005783">
    <property type="term" value="C:endoplasmic reticulum"/>
    <property type="evidence" value="ECO:0000250"/>
    <property type="project" value="UniProtKB"/>
</dbReference>
<dbReference type="GO" id="GO:1990756">
    <property type="term" value="F:ubiquitin-like ligase-substrate adaptor activity"/>
    <property type="evidence" value="ECO:0000250"/>
    <property type="project" value="UniProtKB"/>
</dbReference>
<dbReference type="GO" id="GO:0030968">
    <property type="term" value="P:endoplasmic reticulum unfolded protein response"/>
    <property type="evidence" value="ECO:0000250"/>
    <property type="project" value="UniProtKB"/>
</dbReference>
<dbReference type="GO" id="GO:0045732">
    <property type="term" value="P:positive regulation of protein catabolic process"/>
    <property type="evidence" value="ECO:0000318"/>
    <property type="project" value="GO_Central"/>
</dbReference>
<dbReference type="GO" id="GO:0043161">
    <property type="term" value="P:proteasome-mediated ubiquitin-dependent protein catabolic process"/>
    <property type="evidence" value="ECO:0000250"/>
    <property type="project" value="UniProtKB"/>
</dbReference>
<dbReference type="GO" id="GO:0070979">
    <property type="term" value="P:protein K11-linked ubiquitination"/>
    <property type="evidence" value="ECO:0000250"/>
    <property type="project" value="UniProtKB"/>
</dbReference>
<dbReference type="GO" id="GO:0016567">
    <property type="term" value="P:protein ubiquitination"/>
    <property type="evidence" value="ECO:0000250"/>
    <property type="project" value="UniProtKB"/>
</dbReference>
<dbReference type="FunFam" id="1.10.750.20:FF:000001">
    <property type="entry name" value="Ankyrin repeat and SOCS box containing 1"/>
    <property type="match status" value="1"/>
</dbReference>
<dbReference type="FunFam" id="1.25.40.20:FF:000016">
    <property type="entry name" value="Ankyrin repeat and SOCS box containing 5"/>
    <property type="match status" value="1"/>
</dbReference>
<dbReference type="Gene3D" id="1.25.40.20">
    <property type="entry name" value="Ankyrin repeat-containing domain"/>
    <property type="match status" value="1"/>
</dbReference>
<dbReference type="Gene3D" id="1.10.750.20">
    <property type="entry name" value="SOCS box"/>
    <property type="match status" value="1"/>
</dbReference>
<dbReference type="InterPro" id="IPR051573">
    <property type="entry name" value="Ankyrin-SOCS_box_domain"/>
</dbReference>
<dbReference type="InterPro" id="IPR002110">
    <property type="entry name" value="Ankyrin_rpt"/>
</dbReference>
<dbReference type="InterPro" id="IPR036770">
    <property type="entry name" value="Ankyrin_rpt-contain_sf"/>
</dbReference>
<dbReference type="InterPro" id="IPR001496">
    <property type="entry name" value="SOCS_box"/>
</dbReference>
<dbReference type="InterPro" id="IPR036036">
    <property type="entry name" value="SOCS_box-like_dom_sf"/>
</dbReference>
<dbReference type="PANTHER" id="PTHR24136:SF14">
    <property type="entry name" value="ANKYRIN REPEAT AND SOCS BOX PROTEIN 11"/>
    <property type="match status" value="1"/>
</dbReference>
<dbReference type="PANTHER" id="PTHR24136">
    <property type="entry name" value="SOWAH (DROSOPHILA) HOMOLOG"/>
    <property type="match status" value="1"/>
</dbReference>
<dbReference type="Pfam" id="PF12796">
    <property type="entry name" value="Ank_2"/>
    <property type="match status" value="3"/>
</dbReference>
<dbReference type="Pfam" id="PF07525">
    <property type="entry name" value="SOCS_box"/>
    <property type="match status" value="1"/>
</dbReference>
<dbReference type="SMART" id="SM00248">
    <property type="entry name" value="ANK"/>
    <property type="match status" value="6"/>
</dbReference>
<dbReference type="SMART" id="SM00969">
    <property type="entry name" value="SOCS_box"/>
    <property type="match status" value="1"/>
</dbReference>
<dbReference type="SUPFAM" id="SSF48403">
    <property type="entry name" value="Ankyrin repeat"/>
    <property type="match status" value="1"/>
</dbReference>
<dbReference type="SUPFAM" id="SSF158235">
    <property type="entry name" value="SOCS box-like"/>
    <property type="match status" value="1"/>
</dbReference>
<dbReference type="PROSITE" id="PS50297">
    <property type="entry name" value="ANK_REP_REGION"/>
    <property type="match status" value="1"/>
</dbReference>
<dbReference type="PROSITE" id="PS50088">
    <property type="entry name" value="ANK_REPEAT"/>
    <property type="match status" value="6"/>
</dbReference>
<dbReference type="PROSITE" id="PS50225">
    <property type="entry name" value="SOCS"/>
    <property type="match status" value="1"/>
</dbReference>
<organism>
    <name type="scientific">Bos taurus</name>
    <name type="common">Bovine</name>
    <dbReference type="NCBI Taxonomy" id="9913"/>
    <lineage>
        <taxon>Eukaryota</taxon>
        <taxon>Metazoa</taxon>
        <taxon>Chordata</taxon>
        <taxon>Craniata</taxon>
        <taxon>Vertebrata</taxon>
        <taxon>Euteleostomi</taxon>
        <taxon>Mammalia</taxon>
        <taxon>Eutheria</taxon>
        <taxon>Laurasiatheria</taxon>
        <taxon>Artiodactyla</taxon>
        <taxon>Ruminantia</taxon>
        <taxon>Pecora</taxon>
        <taxon>Bovidae</taxon>
        <taxon>Bovinae</taxon>
        <taxon>Bos</taxon>
    </lineage>
</organism>
<proteinExistence type="evidence at transcript level"/>
<accession>Q3SZE4</accession>
<evidence type="ECO:0000250" key="1">
    <source>
        <dbReference type="UniProtKB" id="Q8WXH4"/>
    </source>
</evidence>
<evidence type="ECO:0000255" key="2">
    <source>
        <dbReference type="PROSITE-ProRule" id="PRU00194"/>
    </source>
</evidence>
<evidence type="ECO:0000305" key="3"/>
<reference key="1">
    <citation type="submission" date="2005-08" db="EMBL/GenBank/DDBJ databases">
        <authorList>
            <consortium name="NIH - Mammalian Gene Collection (MGC) project"/>
        </authorList>
    </citation>
    <scope>NUCLEOTIDE SEQUENCE [LARGE SCALE MRNA]</scope>
    <source>
        <strain>Hereford</strain>
        <tissue>Heart ventricle</tissue>
    </source>
</reference>